<protein>
    <recommendedName>
        <fullName evidence="5">HTH-type transcriptional repressor IacR</fullName>
    </recommendedName>
</protein>
<keyword id="KW-0002">3D-structure</keyword>
<keyword id="KW-0238">DNA-binding</keyword>
<keyword id="KW-0678">Repressor</keyword>
<keyword id="KW-0804">Transcription</keyword>
<keyword id="KW-0805">Transcription regulation</keyword>
<gene>
    <name evidence="4" type="primary">iacR</name>
    <name evidence="6" type="ORF">E6B08_12615</name>
</gene>
<proteinExistence type="evidence at protein level"/>
<evidence type="ECO:0000255" key="1">
    <source>
        <dbReference type="PROSITE-ProRule" id="PRU00345"/>
    </source>
</evidence>
<evidence type="ECO:0000256" key="2">
    <source>
        <dbReference type="SAM" id="MobiDB-lite"/>
    </source>
</evidence>
<evidence type="ECO:0000269" key="3">
    <source>
    </source>
</evidence>
<evidence type="ECO:0000303" key="4">
    <source>
    </source>
</evidence>
<evidence type="ECO:0000305" key="5"/>
<evidence type="ECO:0000312" key="6">
    <source>
        <dbReference type="EMBL" id="QCI12147.1"/>
    </source>
</evidence>
<evidence type="ECO:0007829" key="7">
    <source>
        <dbReference type="PDB" id="7KUA"/>
    </source>
</evidence>
<organism>
    <name type="scientific">Pseudomonas putida</name>
    <name type="common">Arthrobacter siderocapsulatus</name>
    <dbReference type="NCBI Taxonomy" id="303"/>
    <lineage>
        <taxon>Bacteria</taxon>
        <taxon>Pseudomonadati</taxon>
        <taxon>Pseudomonadota</taxon>
        <taxon>Gammaproteobacteria</taxon>
        <taxon>Pseudomonadales</taxon>
        <taxon>Pseudomonadaceae</taxon>
        <taxon>Pseudomonas</taxon>
    </lineage>
</organism>
<accession>B0FXI7</accession>
<name>IACR_PSEPU</name>
<feature type="chain" id="PRO_0000454115" description="HTH-type transcriptional repressor IacR">
    <location>
        <begin position="1"/>
        <end position="167"/>
    </location>
</feature>
<feature type="domain" description="HTH marR-type" evidence="1">
    <location>
        <begin position="30"/>
        <end position="162"/>
    </location>
</feature>
<feature type="DNA-binding region" description="H-T-H motif" evidence="1">
    <location>
        <begin position="76"/>
        <end position="99"/>
    </location>
</feature>
<feature type="region of interest" description="Disordered" evidence="2">
    <location>
        <begin position="1"/>
        <end position="25"/>
    </location>
</feature>
<feature type="compositionally biased region" description="Polar residues" evidence="2">
    <location>
        <begin position="1"/>
        <end position="10"/>
    </location>
</feature>
<feature type="helix" evidence="7">
    <location>
        <begin position="29"/>
        <end position="31"/>
    </location>
</feature>
<feature type="helix" evidence="7">
    <location>
        <begin position="33"/>
        <end position="53"/>
    </location>
</feature>
<feature type="turn" evidence="7">
    <location>
        <begin position="54"/>
        <end position="56"/>
    </location>
</feature>
<feature type="helix" evidence="7">
    <location>
        <begin position="59"/>
        <end position="71"/>
    </location>
</feature>
<feature type="strand" evidence="7">
    <location>
        <begin position="72"/>
        <end position="75"/>
    </location>
</feature>
<feature type="helix" evidence="7">
    <location>
        <begin position="76"/>
        <end position="83"/>
    </location>
</feature>
<feature type="helix" evidence="7">
    <location>
        <begin position="87"/>
        <end position="99"/>
    </location>
</feature>
<feature type="strand" evidence="7">
    <location>
        <begin position="102"/>
        <end position="107"/>
    </location>
</feature>
<feature type="strand" evidence="7">
    <location>
        <begin position="114"/>
        <end position="119"/>
    </location>
</feature>
<feature type="helix" evidence="7">
    <location>
        <begin position="121"/>
        <end position="133"/>
    </location>
</feature>
<feature type="helix" evidence="7">
    <location>
        <begin position="135"/>
        <end position="141"/>
    </location>
</feature>
<feature type="turn" evidence="7">
    <location>
        <begin position="142"/>
        <end position="144"/>
    </location>
</feature>
<feature type="helix" evidence="7">
    <location>
        <begin position="147"/>
        <end position="164"/>
    </location>
</feature>
<reference key="1">
    <citation type="journal article" date="2008" name="FEMS Microbiol. Ecol.">
        <title>Discovery of a bacterial gene cluster for catabolism of the plant hormone indole 3-acetic acid.</title>
        <authorList>
            <person name="Leveau J.H.J."/>
            <person name="Gerards S."/>
        </authorList>
    </citation>
    <scope>NUCLEOTIDE SEQUENCE [GENOMIC DNA]</scope>
    <source>
        <strain>1290</strain>
    </source>
</reference>
<reference key="2">
    <citation type="submission" date="2019-04" db="EMBL/GenBank/DDBJ databases">
        <title>Genome sequence of Pseudomonas putida 1290, an auxin catabolizing strain.</title>
        <authorList>
            <person name="Laird T.S."/>
            <person name="Leveau J.H.J."/>
        </authorList>
    </citation>
    <scope>NUCLEOTIDE SEQUENCE [LARGE SCALE GENOMIC DNA]</scope>
    <source>
        <strain>1290</strain>
    </source>
</reference>
<reference key="3">
    <citation type="journal article" date="2013" name="J. Chem. Ecol.">
        <title>Functional characterization of the bacterial iac genes for degradation of the plant hormone indole-3-acetic acid.</title>
        <authorList>
            <person name="Scott J.C."/>
            <person name="Greenhut I.V."/>
            <person name="Leveau J.H."/>
        </authorList>
    </citation>
    <scope>FUNCTION</scope>
    <scope>ACTIVITY REGULATION</scope>
    <scope>INDUCTION</scope>
    <source>
        <strain>1290</strain>
    </source>
</reference>
<dbReference type="EMBL" id="EU360594">
    <property type="protein sequence ID" value="ABY62764.1"/>
    <property type="molecule type" value="Genomic_DNA"/>
</dbReference>
<dbReference type="EMBL" id="CP039371">
    <property type="protein sequence ID" value="QCI12147.1"/>
    <property type="molecule type" value="Genomic_DNA"/>
</dbReference>
<dbReference type="RefSeq" id="WP_136914308.1">
    <property type="nucleotide sequence ID" value="NZ_CP039371.1"/>
</dbReference>
<dbReference type="PDB" id="7KUA">
    <property type="method" value="X-ray"/>
    <property type="resolution" value="1.89 A"/>
    <property type="chains" value="A=1-167"/>
</dbReference>
<dbReference type="PDBsum" id="7KUA"/>
<dbReference type="SMR" id="B0FXI7"/>
<dbReference type="OrthoDB" id="8684664at2"/>
<dbReference type="Proteomes" id="UP000298551">
    <property type="component" value="Chromosome"/>
</dbReference>
<dbReference type="GO" id="GO:0003677">
    <property type="term" value="F:DNA binding"/>
    <property type="evidence" value="ECO:0007669"/>
    <property type="project" value="UniProtKB-KW"/>
</dbReference>
<dbReference type="GO" id="GO:0003700">
    <property type="term" value="F:DNA-binding transcription factor activity"/>
    <property type="evidence" value="ECO:0007669"/>
    <property type="project" value="InterPro"/>
</dbReference>
<dbReference type="GO" id="GO:0006950">
    <property type="term" value="P:response to stress"/>
    <property type="evidence" value="ECO:0007669"/>
    <property type="project" value="TreeGrafter"/>
</dbReference>
<dbReference type="Gene3D" id="1.10.10.10">
    <property type="entry name" value="Winged helix-like DNA-binding domain superfamily/Winged helix DNA-binding domain"/>
    <property type="match status" value="1"/>
</dbReference>
<dbReference type="InterPro" id="IPR000835">
    <property type="entry name" value="HTH_MarR-typ"/>
</dbReference>
<dbReference type="InterPro" id="IPR039422">
    <property type="entry name" value="MarR/SlyA-like"/>
</dbReference>
<dbReference type="InterPro" id="IPR036388">
    <property type="entry name" value="WH-like_DNA-bd_sf"/>
</dbReference>
<dbReference type="InterPro" id="IPR036390">
    <property type="entry name" value="WH_DNA-bd_sf"/>
</dbReference>
<dbReference type="PANTHER" id="PTHR33164:SF99">
    <property type="entry name" value="MARR FAMILY REGULATORY PROTEIN"/>
    <property type="match status" value="1"/>
</dbReference>
<dbReference type="PANTHER" id="PTHR33164">
    <property type="entry name" value="TRANSCRIPTIONAL REGULATOR, MARR FAMILY"/>
    <property type="match status" value="1"/>
</dbReference>
<dbReference type="Pfam" id="PF01047">
    <property type="entry name" value="MarR"/>
    <property type="match status" value="1"/>
</dbReference>
<dbReference type="SMART" id="SM00347">
    <property type="entry name" value="HTH_MARR"/>
    <property type="match status" value="1"/>
</dbReference>
<dbReference type="SUPFAM" id="SSF46785">
    <property type="entry name" value="Winged helix' DNA-binding domain"/>
    <property type="match status" value="1"/>
</dbReference>
<dbReference type="PROSITE" id="PS50995">
    <property type="entry name" value="HTH_MARR_2"/>
    <property type="match status" value="1"/>
</dbReference>
<comment type="function">
    <text evidence="3">Probably acts as a repressor of iacA expression.</text>
</comment>
<comment type="activity regulation">
    <text evidence="3">Exposure to indole-3-acetic acid (IAA) probably relieves the repressor activity.</text>
</comment>
<comment type="induction">
    <text evidence="3">Induced in the presence of IAA.</text>
</comment>
<comment type="miscellaneous">
    <text evidence="3">Transformation of P.putida KT2440, which cannot degrade IAA, with the iac gene cluster confers the ability to grow on IAA as a sole source of carbon and energy, but not the ability to chemotaxis towards IAA.</text>
</comment>
<sequence>MSNAKNTSAASPARKGHSHHDPASDEFRKEDFPFYWLARVHGRYTQNMERLLKKIDLDVPRWRVLWILNENGESSISEISTHAIAKLSTITKIVYRMKEDGLVDTAPSPEDGRVTQVRITEVGLQNIERMQEVTRELFQRSFKGLTEAQVQRLNRMLEVVFHNLETL</sequence>